<comment type="catalytic activity">
    <reaction evidence="1">
        <text>a plastoquinone + NADH + (n+1) H(+)(in) = a plastoquinol + NAD(+) + n H(+)(out)</text>
        <dbReference type="Rhea" id="RHEA:42608"/>
        <dbReference type="Rhea" id="RHEA-COMP:9561"/>
        <dbReference type="Rhea" id="RHEA-COMP:9562"/>
        <dbReference type="ChEBI" id="CHEBI:15378"/>
        <dbReference type="ChEBI" id="CHEBI:17757"/>
        <dbReference type="ChEBI" id="CHEBI:57540"/>
        <dbReference type="ChEBI" id="CHEBI:57945"/>
        <dbReference type="ChEBI" id="CHEBI:62192"/>
    </reaction>
</comment>
<comment type="catalytic activity">
    <reaction evidence="1">
        <text>a plastoquinone + NADPH + (n+1) H(+)(in) = a plastoquinol + NADP(+) + n H(+)(out)</text>
        <dbReference type="Rhea" id="RHEA:42612"/>
        <dbReference type="Rhea" id="RHEA-COMP:9561"/>
        <dbReference type="Rhea" id="RHEA-COMP:9562"/>
        <dbReference type="ChEBI" id="CHEBI:15378"/>
        <dbReference type="ChEBI" id="CHEBI:17757"/>
        <dbReference type="ChEBI" id="CHEBI:57783"/>
        <dbReference type="ChEBI" id="CHEBI:58349"/>
        <dbReference type="ChEBI" id="CHEBI:62192"/>
    </reaction>
</comment>
<comment type="subcellular location">
    <subcellularLocation>
        <location evidence="1">Plastid</location>
        <location evidence="1">Chloroplast thylakoid membrane</location>
        <topology evidence="1">Multi-pass membrane protein</topology>
    </subcellularLocation>
</comment>
<comment type="similarity">
    <text evidence="1">Belongs to the complex I subunit 4 family.</text>
</comment>
<evidence type="ECO:0000255" key="1">
    <source>
        <dbReference type="HAMAP-Rule" id="MF_00491"/>
    </source>
</evidence>
<geneLocation type="chloroplast"/>
<reference key="1">
    <citation type="journal article" date="2007" name="BMC Plant Biol.">
        <title>Complete plastid genome sequences suggest strong selection for retention of photosynthetic genes in the parasitic plant genus Cuscuta.</title>
        <authorList>
            <person name="McNeal J.R."/>
            <person name="Kuehl J.V."/>
            <person name="Boore J.L."/>
            <person name="dePamphilis C.W."/>
        </authorList>
    </citation>
    <scope>NUCLEOTIDE SEQUENCE [LARGE SCALE GENOMIC DNA]</scope>
</reference>
<feature type="chain" id="PRO_0000343287" description="NAD(P)H-quinone oxidoreductase chain 4, chloroplastic">
    <location>
        <begin position="1"/>
        <end position="503"/>
    </location>
</feature>
<feature type="transmembrane region" description="Helical" evidence="1">
    <location>
        <begin position="3"/>
        <end position="23"/>
    </location>
</feature>
<feature type="transmembrane region" description="Helical" evidence="1">
    <location>
        <begin position="37"/>
        <end position="57"/>
    </location>
</feature>
<feature type="transmembrane region" description="Helical" evidence="1">
    <location>
        <begin position="84"/>
        <end position="104"/>
    </location>
</feature>
<feature type="transmembrane region" description="Helical" evidence="1">
    <location>
        <begin position="113"/>
        <end position="130"/>
    </location>
</feature>
<feature type="transmembrane region" description="Helical" evidence="1">
    <location>
        <begin position="134"/>
        <end position="154"/>
    </location>
</feature>
<feature type="transmembrane region" description="Helical" evidence="1">
    <location>
        <begin position="167"/>
        <end position="187"/>
    </location>
</feature>
<feature type="transmembrane region" description="Helical" evidence="1">
    <location>
        <begin position="208"/>
        <end position="228"/>
    </location>
</feature>
<feature type="transmembrane region" description="Helical" evidence="1">
    <location>
        <begin position="242"/>
        <end position="262"/>
    </location>
</feature>
<feature type="transmembrane region" description="Helical" evidence="1">
    <location>
        <begin position="274"/>
        <end position="294"/>
    </location>
</feature>
<feature type="transmembrane region" description="Helical" evidence="1">
    <location>
        <begin position="305"/>
        <end position="325"/>
    </location>
</feature>
<feature type="transmembrane region" description="Helical" evidence="1">
    <location>
        <begin position="330"/>
        <end position="350"/>
    </location>
</feature>
<feature type="transmembrane region" description="Helical" evidence="1">
    <location>
        <begin position="385"/>
        <end position="405"/>
    </location>
</feature>
<feature type="transmembrane region" description="Helical" evidence="1">
    <location>
        <begin position="416"/>
        <end position="436"/>
    </location>
</feature>
<feature type="transmembrane region" description="Helical" evidence="1">
    <location>
        <begin position="462"/>
        <end position="482"/>
    </location>
</feature>
<accession>A7Y3L2</accession>
<name>NU4C_IPOPU</name>
<gene>
    <name evidence="1" type="primary">ndhD</name>
</gene>
<keyword id="KW-0150">Chloroplast</keyword>
<keyword id="KW-0472">Membrane</keyword>
<keyword id="KW-0520">NAD</keyword>
<keyword id="KW-0521">NADP</keyword>
<keyword id="KW-0934">Plastid</keyword>
<keyword id="KW-0618">Plastoquinone</keyword>
<keyword id="KW-0874">Quinone</keyword>
<keyword id="KW-0793">Thylakoid</keyword>
<keyword id="KW-1278">Translocase</keyword>
<keyword id="KW-0812">Transmembrane</keyword>
<keyword id="KW-1133">Transmembrane helix</keyword>
<organism>
    <name type="scientific">Ipomoea purpurea</name>
    <name type="common">Common morning glory</name>
    <name type="synonym">Pharbitis purpurea</name>
    <dbReference type="NCBI Taxonomy" id="4121"/>
    <lineage>
        <taxon>Eukaryota</taxon>
        <taxon>Viridiplantae</taxon>
        <taxon>Streptophyta</taxon>
        <taxon>Embryophyta</taxon>
        <taxon>Tracheophyta</taxon>
        <taxon>Spermatophyta</taxon>
        <taxon>Magnoliopsida</taxon>
        <taxon>eudicotyledons</taxon>
        <taxon>Gunneridae</taxon>
        <taxon>Pentapetalae</taxon>
        <taxon>asterids</taxon>
        <taxon>lamiids</taxon>
        <taxon>Solanales</taxon>
        <taxon>Convolvulaceae</taxon>
        <taxon>Ipomoeeae</taxon>
        <taxon>Ipomoea</taxon>
    </lineage>
</organism>
<protein>
    <recommendedName>
        <fullName evidence="1">NAD(P)H-quinone oxidoreductase chain 4, chloroplastic</fullName>
        <ecNumber evidence="1">7.1.1.-</ecNumber>
    </recommendedName>
    <alternativeName>
        <fullName evidence="1">NAD(P)H dehydrogenase, chain 4</fullName>
    </alternativeName>
    <alternativeName>
        <fullName evidence="1">NADH-plastoquinone oxidoreductase chain 4</fullName>
    </alternativeName>
</protein>
<dbReference type="EC" id="7.1.1.-" evidence="1"/>
<dbReference type="EMBL" id="EU118126">
    <property type="protein sequence ID" value="ABV02401.1"/>
    <property type="molecule type" value="Genomic_DNA"/>
</dbReference>
<dbReference type="RefSeq" id="YP_001468361.1">
    <property type="nucleotide sequence ID" value="NC_009808.1"/>
</dbReference>
<dbReference type="SMR" id="A7Y3L2"/>
<dbReference type="GeneID" id="5601225"/>
<dbReference type="GO" id="GO:0009535">
    <property type="term" value="C:chloroplast thylakoid membrane"/>
    <property type="evidence" value="ECO:0007669"/>
    <property type="project" value="UniProtKB-SubCell"/>
</dbReference>
<dbReference type="GO" id="GO:0008137">
    <property type="term" value="F:NADH dehydrogenase (ubiquinone) activity"/>
    <property type="evidence" value="ECO:0007669"/>
    <property type="project" value="InterPro"/>
</dbReference>
<dbReference type="GO" id="GO:0048039">
    <property type="term" value="F:ubiquinone binding"/>
    <property type="evidence" value="ECO:0007669"/>
    <property type="project" value="TreeGrafter"/>
</dbReference>
<dbReference type="GO" id="GO:0042773">
    <property type="term" value="P:ATP synthesis coupled electron transport"/>
    <property type="evidence" value="ECO:0007669"/>
    <property type="project" value="InterPro"/>
</dbReference>
<dbReference type="GO" id="GO:0015990">
    <property type="term" value="P:electron transport coupled proton transport"/>
    <property type="evidence" value="ECO:0007669"/>
    <property type="project" value="TreeGrafter"/>
</dbReference>
<dbReference type="HAMAP" id="MF_00491">
    <property type="entry name" value="NDH1_NuoM"/>
    <property type="match status" value="1"/>
</dbReference>
<dbReference type="InterPro" id="IPR022997">
    <property type="entry name" value="NADH_Q_OxRdtase_chain4"/>
</dbReference>
<dbReference type="InterPro" id="IPR010227">
    <property type="entry name" value="NADH_Q_OxRdtase_chainM/4"/>
</dbReference>
<dbReference type="InterPro" id="IPR003918">
    <property type="entry name" value="NADH_UbQ_OxRdtase"/>
</dbReference>
<dbReference type="InterPro" id="IPR001750">
    <property type="entry name" value="ND/Mrp_TM"/>
</dbReference>
<dbReference type="NCBIfam" id="TIGR01972">
    <property type="entry name" value="NDH_I_M"/>
    <property type="match status" value="1"/>
</dbReference>
<dbReference type="PANTHER" id="PTHR43507:SF21">
    <property type="entry name" value="NAD(P)H-QUINONE OXIDOREDUCTASE CHAIN 4, CHLOROPLASTIC"/>
    <property type="match status" value="1"/>
</dbReference>
<dbReference type="PANTHER" id="PTHR43507">
    <property type="entry name" value="NADH-UBIQUINONE OXIDOREDUCTASE CHAIN 4"/>
    <property type="match status" value="1"/>
</dbReference>
<dbReference type="Pfam" id="PF00361">
    <property type="entry name" value="Proton_antipo_M"/>
    <property type="match status" value="1"/>
</dbReference>
<dbReference type="PRINTS" id="PR01437">
    <property type="entry name" value="NUOXDRDTASE4"/>
</dbReference>
<proteinExistence type="inferred from homology"/>
<sequence length="503" mass="56674">MNFFPWLTIIVVFPIFAGSIVFFLPHKGNRVIRWYTLCICILELLITTYTFCFHFQVDDPLIQLEETYKWINFFDCHWRLGIDGLSVGPILLTGFITTLATLAARPVTRDSRLFHFLMLAMYSGQIGLFASRDLFLFFIMWELELIPVYLLLSMWGGKKRLYSATKFILYTAGGSIFLLMGVLGLTLYGSNEPTFNFETSVNQSYPAALEIIFYIGFFIAFAVKSPILPLHTWLPDTHGEAHYSTCMLLAGILLKMGAYGLIRINMELFPHAHSLFSPYLVIVGTIQMIYAALTSLGQRNLKRRIAYSSVSHMGFIIIGIGSMTDTGLNGALLQIISHGFIGAALFFLAGTTYDRIRLVYLDEMGGIAIQMPKIFTMFSSFSMASLALPGMSGFVAELLVFFGIISAKKYLFMSKILISFVMAIGIILTPIYSLSMLRQMFYGYKLFNAPNSSFLDSGPRELFLSISILLPVIGIGMYPDFVLSLSVEKVEVILSHFFYRQVL</sequence>